<feature type="signal peptide" evidence="2">
    <location>
        <begin position="1"/>
        <end position="33"/>
    </location>
</feature>
<feature type="propeptide" id="PRO_0000400675" evidence="1">
    <location>
        <begin position="34"/>
        <end position="61"/>
    </location>
</feature>
<feature type="peptide" id="PRO_0000400676" description="U6-theraphotoxin-Hhn1a 3">
    <location>
        <begin position="62"/>
        <end position="97"/>
    </location>
</feature>
<feature type="disulfide bond" evidence="1">
    <location>
        <begin position="63"/>
        <end position="77"/>
    </location>
</feature>
<feature type="disulfide bond" evidence="1">
    <location>
        <begin position="70"/>
        <end position="82"/>
    </location>
</feature>
<feature type="disulfide bond" evidence="1">
    <location>
        <begin position="76"/>
        <end position="89"/>
    </location>
</feature>
<protein>
    <recommendedName>
        <fullName>U6-theraphotoxin-Hhn1a 3</fullName>
        <shortName>U6-TRTX-Hhn1a</shortName>
    </recommendedName>
    <alternativeName>
        <fullName evidence="4">Hainantoxin-XII.3</fullName>
        <shortName evidence="4">HNTX-XII.3</shortName>
    </alternativeName>
</protein>
<sequence length="97" mass="11184">MLIKQFSRRSKNTKVQILLAFAALFVLAVGSYASESKKLDLRDALFSAMFSADYQLNPQERGCRYFLGECKKTSECCEHLACHDKHKWCAWDWTIGK</sequence>
<reference key="1">
    <citation type="journal article" date="2010" name="J. Proteome Res.">
        <title>Molecular diversification of peptide toxins from the tarantula Haplopelma hainanum (Ornithoctonus hainana) venom based on transcriptomic, peptidomic, and genomic analyses.</title>
        <authorList>
            <person name="Tang X."/>
            <person name="Zhang Y."/>
            <person name="Hu W."/>
            <person name="Xu D."/>
            <person name="Tao H."/>
            <person name="Yang X."/>
            <person name="Li Y."/>
            <person name="Jiang L."/>
            <person name="Liang S."/>
        </authorList>
    </citation>
    <scope>NUCLEOTIDE SEQUENCE [LARGE SCALE MRNA]</scope>
    <source>
        <tissue>Venom gland</tissue>
    </source>
</reference>
<keyword id="KW-1015">Disulfide bond</keyword>
<keyword id="KW-0872">Ion channel impairing toxin</keyword>
<keyword id="KW-0960">Knottin</keyword>
<keyword id="KW-0964">Secreted</keyword>
<keyword id="KW-0732">Signal</keyword>
<keyword id="KW-0800">Toxin</keyword>
<name>H12A3_CYRHA</name>
<proteinExistence type="evidence at transcript level"/>
<accession>D2Y2H7</accession>
<dbReference type="EMBL" id="GU293054">
    <property type="protein sequence ID" value="ADB56870.1"/>
    <property type="molecule type" value="mRNA"/>
</dbReference>
<dbReference type="SMR" id="D2Y2H7"/>
<dbReference type="ArachnoServer" id="AS001585">
    <property type="toxin name" value="U6-theraphotoxin-Hhn1a"/>
</dbReference>
<dbReference type="GO" id="GO:0005576">
    <property type="term" value="C:extracellular region"/>
    <property type="evidence" value="ECO:0007669"/>
    <property type="project" value="UniProtKB-SubCell"/>
</dbReference>
<dbReference type="GO" id="GO:0008200">
    <property type="term" value="F:ion channel inhibitor activity"/>
    <property type="evidence" value="ECO:0007669"/>
    <property type="project" value="InterPro"/>
</dbReference>
<dbReference type="GO" id="GO:0090729">
    <property type="term" value="F:toxin activity"/>
    <property type="evidence" value="ECO:0007669"/>
    <property type="project" value="UniProtKB-KW"/>
</dbReference>
<dbReference type="InterPro" id="IPR011696">
    <property type="entry name" value="Huwentoxin-1"/>
</dbReference>
<dbReference type="InterPro" id="IPR013140">
    <property type="entry name" value="Huwentoxin_CS1"/>
</dbReference>
<dbReference type="Pfam" id="PF07740">
    <property type="entry name" value="Toxin_12"/>
    <property type="match status" value="1"/>
</dbReference>
<dbReference type="SUPFAM" id="SSF57059">
    <property type="entry name" value="omega toxin-like"/>
    <property type="match status" value="1"/>
</dbReference>
<dbReference type="PROSITE" id="PS60021">
    <property type="entry name" value="HWTX_1"/>
    <property type="match status" value="1"/>
</dbReference>
<organism>
    <name type="scientific">Cyriopagopus hainanus</name>
    <name type="common">Chinese bird spider</name>
    <name type="synonym">Haplopelma hainanum</name>
    <dbReference type="NCBI Taxonomy" id="209901"/>
    <lineage>
        <taxon>Eukaryota</taxon>
        <taxon>Metazoa</taxon>
        <taxon>Ecdysozoa</taxon>
        <taxon>Arthropoda</taxon>
        <taxon>Chelicerata</taxon>
        <taxon>Arachnida</taxon>
        <taxon>Araneae</taxon>
        <taxon>Mygalomorphae</taxon>
        <taxon>Theraphosidae</taxon>
        <taxon>Haplopelma</taxon>
    </lineage>
</organism>
<evidence type="ECO:0000250" key="1"/>
<evidence type="ECO:0000255" key="2"/>
<evidence type="ECO:0000305" key="3"/>
<evidence type="ECO:0000312" key="4">
    <source>
        <dbReference type="EMBL" id="ADB56870.1"/>
    </source>
</evidence>
<comment type="function">
    <text evidence="1">Ion channel inhibitor.</text>
</comment>
<comment type="subcellular location">
    <subcellularLocation>
        <location evidence="1">Secreted</location>
    </subcellularLocation>
</comment>
<comment type="tissue specificity">
    <text>Expressed by the venom gland.</text>
</comment>
<comment type="domain">
    <text evidence="1">The presence of a 'disulfide through disulfide knot' structurally defines this protein as a knottin.</text>
</comment>
<comment type="similarity">
    <text evidence="3">Belongs to the neurotoxin 10 (Hwtx-1) family. 12 (Hntx-12) subfamily.</text>
</comment>